<proteinExistence type="inferred from homology"/>
<name>GLYA_LACP3</name>
<feature type="chain" id="PRO_1000006269" description="Serine hydroxymethyltransferase">
    <location>
        <begin position="1"/>
        <end position="410"/>
    </location>
</feature>
<feature type="binding site" evidence="1">
    <location>
        <position position="116"/>
    </location>
    <ligand>
        <name>(6S)-5,6,7,8-tetrahydrofolate</name>
        <dbReference type="ChEBI" id="CHEBI:57453"/>
    </ligand>
</feature>
<feature type="binding site" evidence="1">
    <location>
        <begin position="120"/>
        <end position="122"/>
    </location>
    <ligand>
        <name>(6S)-5,6,7,8-tetrahydrofolate</name>
        <dbReference type="ChEBI" id="CHEBI:57453"/>
    </ligand>
</feature>
<feature type="site" description="Plays an important role in substrate specificity" evidence="1">
    <location>
        <position position="224"/>
    </location>
</feature>
<feature type="modified residue" description="N6-(pyridoxal phosphate)lysine" evidence="1">
    <location>
        <position position="225"/>
    </location>
</feature>
<organism>
    <name type="scientific">Lacticaseibacillus paracasei (strain ATCC 334 / BCRC 17002 / CCUG 31169 / CIP 107868 / KCTC 3260 / NRRL B-441)</name>
    <name type="common">Lactobacillus paracasei</name>
    <dbReference type="NCBI Taxonomy" id="321967"/>
    <lineage>
        <taxon>Bacteria</taxon>
        <taxon>Bacillati</taxon>
        <taxon>Bacillota</taxon>
        <taxon>Bacilli</taxon>
        <taxon>Lactobacillales</taxon>
        <taxon>Lactobacillaceae</taxon>
        <taxon>Lacticaseibacillus</taxon>
    </lineage>
</organism>
<protein>
    <recommendedName>
        <fullName evidence="1">Serine hydroxymethyltransferase</fullName>
        <shortName evidence="1">SHMT</shortName>
        <shortName evidence="1">Serine methylase</shortName>
        <ecNumber evidence="1">2.1.2.1</ecNumber>
    </recommendedName>
</protein>
<dbReference type="EC" id="2.1.2.1" evidence="1"/>
<dbReference type="EMBL" id="CP000423">
    <property type="protein sequence ID" value="ABJ69946.1"/>
    <property type="molecule type" value="Genomic_DNA"/>
</dbReference>
<dbReference type="RefSeq" id="WP_011674408.1">
    <property type="nucleotide sequence ID" value="NC_008526.1"/>
</dbReference>
<dbReference type="RefSeq" id="YP_806388.1">
    <property type="nucleotide sequence ID" value="NC_008526.1"/>
</dbReference>
<dbReference type="SMR" id="Q03A26"/>
<dbReference type="STRING" id="321967.LSEI_1158"/>
<dbReference type="PaxDb" id="321967-LSEI_1158"/>
<dbReference type="KEGG" id="lca:LSEI_1158"/>
<dbReference type="PATRIC" id="fig|321967.11.peg.1131"/>
<dbReference type="HOGENOM" id="CLU_022477_2_1_9"/>
<dbReference type="UniPathway" id="UPA00193"/>
<dbReference type="UniPathway" id="UPA00288">
    <property type="reaction ID" value="UER01023"/>
</dbReference>
<dbReference type="Proteomes" id="UP000001651">
    <property type="component" value="Chromosome"/>
</dbReference>
<dbReference type="GO" id="GO:0005829">
    <property type="term" value="C:cytosol"/>
    <property type="evidence" value="ECO:0007669"/>
    <property type="project" value="TreeGrafter"/>
</dbReference>
<dbReference type="GO" id="GO:0004372">
    <property type="term" value="F:glycine hydroxymethyltransferase activity"/>
    <property type="evidence" value="ECO:0007669"/>
    <property type="project" value="UniProtKB-UniRule"/>
</dbReference>
<dbReference type="GO" id="GO:0030170">
    <property type="term" value="F:pyridoxal phosphate binding"/>
    <property type="evidence" value="ECO:0007669"/>
    <property type="project" value="UniProtKB-UniRule"/>
</dbReference>
<dbReference type="GO" id="GO:0019264">
    <property type="term" value="P:glycine biosynthetic process from serine"/>
    <property type="evidence" value="ECO:0007669"/>
    <property type="project" value="UniProtKB-UniRule"/>
</dbReference>
<dbReference type="GO" id="GO:0035999">
    <property type="term" value="P:tetrahydrofolate interconversion"/>
    <property type="evidence" value="ECO:0007669"/>
    <property type="project" value="UniProtKB-UniRule"/>
</dbReference>
<dbReference type="CDD" id="cd00378">
    <property type="entry name" value="SHMT"/>
    <property type="match status" value="1"/>
</dbReference>
<dbReference type="FunFam" id="3.40.640.10:FF:000001">
    <property type="entry name" value="Serine hydroxymethyltransferase"/>
    <property type="match status" value="1"/>
</dbReference>
<dbReference type="Gene3D" id="3.90.1150.10">
    <property type="entry name" value="Aspartate Aminotransferase, domain 1"/>
    <property type="match status" value="1"/>
</dbReference>
<dbReference type="Gene3D" id="3.40.640.10">
    <property type="entry name" value="Type I PLP-dependent aspartate aminotransferase-like (Major domain)"/>
    <property type="match status" value="1"/>
</dbReference>
<dbReference type="HAMAP" id="MF_00051">
    <property type="entry name" value="SHMT"/>
    <property type="match status" value="1"/>
</dbReference>
<dbReference type="InterPro" id="IPR015424">
    <property type="entry name" value="PyrdxlP-dep_Trfase"/>
</dbReference>
<dbReference type="InterPro" id="IPR015421">
    <property type="entry name" value="PyrdxlP-dep_Trfase_major"/>
</dbReference>
<dbReference type="InterPro" id="IPR015422">
    <property type="entry name" value="PyrdxlP-dep_Trfase_small"/>
</dbReference>
<dbReference type="InterPro" id="IPR001085">
    <property type="entry name" value="Ser_HO-MeTrfase"/>
</dbReference>
<dbReference type="InterPro" id="IPR049943">
    <property type="entry name" value="Ser_HO-MeTrfase-like"/>
</dbReference>
<dbReference type="InterPro" id="IPR019798">
    <property type="entry name" value="Ser_HO-MeTrfase_PLP_BS"/>
</dbReference>
<dbReference type="InterPro" id="IPR039429">
    <property type="entry name" value="SHMT-like_dom"/>
</dbReference>
<dbReference type="NCBIfam" id="NF000586">
    <property type="entry name" value="PRK00011.1"/>
    <property type="match status" value="1"/>
</dbReference>
<dbReference type="PANTHER" id="PTHR11680">
    <property type="entry name" value="SERINE HYDROXYMETHYLTRANSFERASE"/>
    <property type="match status" value="1"/>
</dbReference>
<dbReference type="PANTHER" id="PTHR11680:SF35">
    <property type="entry name" value="SERINE HYDROXYMETHYLTRANSFERASE 1"/>
    <property type="match status" value="1"/>
</dbReference>
<dbReference type="Pfam" id="PF00464">
    <property type="entry name" value="SHMT"/>
    <property type="match status" value="1"/>
</dbReference>
<dbReference type="PIRSF" id="PIRSF000412">
    <property type="entry name" value="SHMT"/>
    <property type="match status" value="1"/>
</dbReference>
<dbReference type="SUPFAM" id="SSF53383">
    <property type="entry name" value="PLP-dependent transferases"/>
    <property type="match status" value="1"/>
</dbReference>
<dbReference type="PROSITE" id="PS00096">
    <property type="entry name" value="SHMT"/>
    <property type="match status" value="1"/>
</dbReference>
<comment type="function">
    <text evidence="1">Catalyzes the reversible interconversion of serine and glycine with tetrahydrofolate (THF) serving as the one-carbon carrier. This reaction serves as the major source of one-carbon groups required for the biosynthesis of purines, thymidylate, methionine, and other important biomolecules. Also exhibits THF-independent aldolase activity toward beta-hydroxyamino acids, producing glycine and aldehydes, via a retro-aldol mechanism.</text>
</comment>
<comment type="catalytic activity">
    <reaction evidence="1">
        <text>(6R)-5,10-methylene-5,6,7,8-tetrahydrofolate + glycine + H2O = (6S)-5,6,7,8-tetrahydrofolate + L-serine</text>
        <dbReference type="Rhea" id="RHEA:15481"/>
        <dbReference type="ChEBI" id="CHEBI:15377"/>
        <dbReference type="ChEBI" id="CHEBI:15636"/>
        <dbReference type="ChEBI" id="CHEBI:33384"/>
        <dbReference type="ChEBI" id="CHEBI:57305"/>
        <dbReference type="ChEBI" id="CHEBI:57453"/>
        <dbReference type="EC" id="2.1.2.1"/>
    </reaction>
</comment>
<comment type="cofactor">
    <cofactor evidence="1">
        <name>pyridoxal 5'-phosphate</name>
        <dbReference type="ChEBI" id="CHEBI:597326"/>
    </cofactor>
</comment>
<comment type="pathway">
    <text evidence="1">One-carbon metabolism; tetrahydrofolate interconversion.</text>
</comment>
<comment type="pathway">
    <text evidence="1">Amino-acid biosynthesis; glycine biosynthesis; glycine from L-serine: step 1/1.</text>
</comment>
<comment type="subunit">
    <text evidence="1">Homodimer.</text>
</comment>
<comment type="subcellular location">
    <subcellularLocation>
        <location evidence="1">Cytoplasm</location>
    </subcellularLocation>
</comment>
<comment type="similarity">
    <text evidence="1">Belongs to the SHMT family.</text>
</comment>
<sequence length="410" mass="44585">MDFMAQDPEVFGAIHNEEERQEHNIELIASENIVSPAVRAAQGSVLTNKYSEGYPGHRYYGGNQYIDVVENLAIDRAKKLFGAEFANVQPHSGSQANMATYRAFLEDGDKVLAMDLTDGGHLTHGSPVSFSGQEYHFYHYGLDPKTERLNYAKIREQAEQVQPRMIVAGASAYSREIDFKKFREIADHVGAFLMVDMAHIAGLVAAGLHMNPVPYADVVTTTTHKTLRGPRGGLILAKAQYGKAINSALFPGIQGGPLDHVVAAKAVALGEALQPSFKTYAQHILDNMQAMVSGFEEDPHLRLISGGSDNHMVLIDVTGYGVNGRQVQDLLDEVGITTNKNQIPGEQNGPFKTSGIRVGTAAITTRGFTADESKRVGELISAAIAQRDDQPALDQIHQEVLALTARHPLS</sequence>
<accession>Q03A26</accession>
<evidence type="ECO:0000255" key="1">
    <source>
        <dbReference type="HAMAP-Rule" id="MF_00051"/>
    </source>
</evidence>
<gene>
    <name evidence="1" type="primary">glyA</name>
    <name type="ordered locus">LSEI_1158</name>
</gene>
<reference key="1">
    <citation type="journal article" date="2006" name="Proc. Natl. Acad. Sci. U.S.A.">
        <title>Comparative genomics of the lactic acid bacteria.</title>
        <authorList>
            <person name="Makarova K.S."/>
            <person name="Slesarev A."/>
            <person name="Wolf Y.I."/>
            <person name="Sorokin A."/>
            <person name="Mirkin B."/>
            <person name="Koonin E.V."/>
            <person name="Pavlov A."/>
            <person name="Pavlova N."/>
            <person name="Karamychev V."/>
            <person name="Polouchine N."/>
            <person name="Shakhova V."/>
            <person name="Grigoriev I."/>
            <person name="Lou Y."/>
            <person name="Rohksar D."/>
            <person name="Lucas S."/>
            <person name="Huang K."/>
            <person name="Goodstein D.M."/>
            <person name="Hawkins T."/>
            <person name="Plengvidhya V."/>
            <person name="Welker D."/>
            <person name="Hughes J."/>
            <person name="Goh Y."/>
            <person name="Benson A."/>
            <person name="Baldwin K."/>
            <person name="Lee J.-H."/>
            <person name="Diaz-Muniz I."/>
            <person name="Dosti B."/>
            <person name="Smeianov V."/>
            <person name="Wechter W."/>
            <person name="Barabote R."/>
            <person name="Lorca G."/>
            <person name="Altermann E."/>
            <person name="Barrangou R."/>
            <person name="Ganesan B."/>
            <person name="Xie Y."/>
            <person name="Rawsthorne H."/>
            <person name="Tamir D."/>
            <person name="Parker C."/>
            <person name="Breidt F."/>
            <person name="Broadbent J.R."/>
            <person name="Hutkins R."/>
            <person name="O'Sullivan D."/>
            <person name="Steele J."/>
            <person name="Unlu G."/>
            <person name="Saier M.H. Jr."/>
            <person name="Klaenhammer T."/>
            <person name="Richardson P."/>
            <person name="Kozyavkin S."/>
            <person name="Weimer B.C."/>
            <person name="Mills D.A."/>
        </authorList>
    </citation>
    <scope>NUCLEOTIDE SEQUENCE [LARGE SCALE GENOMIC DNA]</scope>
    <source>
        <strain>ATCC 334 / BCRC 17002 / CCUG 31169 / CIP 107868 / KCTC 3260 / NRRL B-441</strain>
    </source>
</reference>
<keyword id="KW-0028">Amino-acid biosynthesis</keyword>
<keyword id="KW-0963">Cytoplasm</keyword>
<keyword id="KW-0554">One-carbon metabolism</keyword>
<keyword id="KW-0663">Pyridoxal phosphate</keyword>
<keyword id="KW-1185">Reference proteome</keyword>
<keyword id="KW-0808">Transferase</keyword>